<comment type="function">
    <text evidence="1">Specifically methylates the N7 position of guanine in position 527 of 16S rRNA.</text>
</comment>
<comment type="catalytic activity">
    <reaction evidence="1">
        <text>guanosine(527) in 16S rRNA + S-adenosyl-L-methionine = N(7)-methylguanosine(527) in 16S rRNA + S-adenosyl-L-homocysteine</text>
        <dbReference type="Rhea" id="RHEA:42732"/>
        <dbReference type="Rhea" id="RHEA-COMP:10209"/>
        <dbReference type="Rhea" id="RHEA-COMP:10210"/>
        <dbReference type="ChEBI" id="CHEBI:57856"/>
        <dbReference type="ChEBI" id="CHEBI:59789"/>
        <dbReference type="ChEBI" id="CHEBI:74269"/>
        <dbReference type="ChEBI" id="CHEBI:74480"/>
        <dbReference type="EC" id="2.1.1.170"/>
    </reaction>
</comment>
<comment type="subcellular location">
    <subcellularLocation>
        <location evidence="1">Cytoplasm</location>
    </subcellularLocation>
</comment>
<comment type="similarity">
    <text evidence="1">Belongs to the methyltransferase superfamily. RNA methyltransferase RsmG family.</text>
</comment>
<sequence length="207" mass="23175">MLNKLSRLLADAGISLTDHQKTLLVAYVDMLHKWNKAYNLTSVRDPNEMLVRHILDSIVVAPYLQGQRFIDVGTGPGLPGIPLAIVLPDAHFTLLDSLGKRVRFLRQVQHELKLENITPVQSRVEAYPSEPPFDGVISRAFASLNDMVSWCHHLPGEKGRFYALKGQLPGDEIASLPDNFSVESVEKLRVPQLEGERHLVIIKSNKV</sequence>
<accession>A9MXB7</accession>
<keyword id="KW-0963">Cytoplasm</keyword>
<keyword id="KW-0489">Methyltransferase</keyword>
<keyword id="KW-0698">rRNA processing</keyword>
<keyword id="KW-0949">S-adenosyl-L-methionine</keyword>
<keyword id="KW-0808">Transferase</keyword>
<dbReference type="EC" id="2.1.1.170" evidence="1"/>
<dbReference type="EMBL" id="CP000886">
    <property type="protein sequence ID" value="ABX70128.1"/>
    <property type="molecule type" value="Genomic_DNA"/>
</dbReference>
<dbReference type="RefSeq" id="WP_001519938.1">
    <property type="nucleotide sequence ID" value="NC_010102.1"/>
</dbReference>
<dbReference type="SMR" id="A9MXB7"/>
<dbReference type="KEGG" id="spq:SPAB_04817"/>
<dbReference type="PATRIC" id="fig|1016998.12.peg.4531"/>
<dbReference type="HOGENOM" id="CLU_065341_2_2_6"/>
<dbReference type="BioCyc" id="SENT1016998:SPAB_RS19555-MONOMER"/>
<dbReference type="Proteomes" id="UP000008556">
    <property type="component" value="Chromosome"/>
</dbReference>
<dbReference type="GO" id="GO:0005829">
    <property type="term" value="C:cytosol"/>
    <property type="evidence" value="ECO:0007669"/>
    <property type="project" value="TreeGrafter"/>
</dbReference>
<dbReference type="GO" id="GO:0070043">
    <property type="term" value="F:rRNA (guanine-N7-)-methyltransferase activity"/>
    <property type="evidence" value="ECO:0007669"/>
    <property type="project" value="UniProtKB-UniRule"/>
</dbReference>
<dbReference type="CDD" id="cd02440">
    <property type="entry name" value="AdoMet_MTases"/>
    <property type="match status" value="1"/>
</dbReference>
<dbReference type="FunFam" id="3.40.50.150:FF:000032">
    <property type="entry name" value="Ribosomal RNA small subunit methyltransferase G"/>
    <property type="match status" value="1"/>
</dbReference>
<dbReference type="Gene3D" id="3.40.50.150">
    <property type="entry name" value="Vaccinia Virus protein VP39"/>
    <property type="match status" value="1"/>
</dbReference>
<dbReference type="HAMAP" id="MF_00074">
    <property type="entry name" value="16SrRNA_methyltr_G"/>
    <property type="match status" value="1"/>
</dbReference>
<dbReference type="InterPro" id="IPR003682">
    <property type="entry name" value="rRNA_ssu_MeTfrase_G"/>
</dbReference>
<dbReference type="InterPro" id="IPR029063">
    <property type="entry name" value="SAM-dependent_MTases_sf"/>
</dbReference>
<dbReference type="NCBIfam" id="TIGR00138">
    <property type="entry name" value="rsmG_gidB"/>
    <property type="match status" value="1"/>
</dbReference>
<dbReference type="PANTHER" id="PTHR31760">
    <property type="entry name" value="S-ADENOSYL-L-METHIONINE-DEPENDENT METHYLTRANSFERASES SUPERFAMILY PROTEIN"/>
    <property type="match status" value="1"/>
</dbReference>
<dbReference type="PANTHER" id="PTHR31760:SF0">
    <property type="entry name" value="S-ADENOSYL-L-METHIONINE-DEPENDENT METHYLTRANSFERASES SUPERFAMILY PROTEIN"/>
    <property type="match status" value="1"/>
</dbReference>
<dbReference type="Pfam" id="PF02527">
    <property type="entry name" value="GidB"/>
    <property type="match status" value="1"/>
</dbReference>
<dbReference type="PIRSF" id="PIRSF003078">
    <property type="entry name" value="GidB"/>
    <property type="match status" value="1"/>
</dbReference>
<dbReference type="SUPFAM" id="SSF53335">
    <property type="entry name" value="S-adenosyl-L-methionine-dependent methyltransferases"/>
    <property type="match status" value="1"/>
</dbReference>
<name>RSMG_SALPB</name>
<feature type="chain" id="PRO_1000075230" description="Ribosomal RNA small subunit methyltransferase G">
    <location>
        <begin position="1"/>
        <end position="207"/>
    </location>
</feature>
<feature type="binding site" evidence="1">
    <location>
        <position position="73"/>
    </location>
    <ligand>
        <name>S-adenosyl-L-methionine</name>
        <dbReference type="ChEBI" id="CHEBI:59789"/>
    </ligand>
</feature>
<feature type="binding site" evidence="1">
    <location>
        <position position="78"/>
    </location>
    <ligand>
        <name>S-adenosyl-L-methionine</name>
        <dbReference type="ChEBI" id="CHEBI:59789"/>
    </ligand>
</feature>
<feature type="binding site" evidence="1">
    <location>
        <begin position="124"/>
        <end position="125"/>
    </location>
    <ligand>
        <name>S-adenosyl-L-methionine</name>
        <dbReference type="ChEBI" id="CHEBI:59789"/>
    </ligand>
</feature>
<feature type="binding site" evidence="1">
    <location>
        <position position="139"/>
    </location>
    <ligand>
        <name>S-adenosyl-L-methionine</name>
        <dbReference type="ChEBI" id="CHEBI:59789"/>
    </ligand>
</feature>
<gene>
    <name evidence="1" type="primary">rsmG</name>
    <name type="ordered locus">SPAB_04817</name>
</gene>
<protein>
    <recommendedName>
        <fullName evidence="1">Ribosomal RNA small subunit methyltransferase G</fullName>
        <ecNumber evidence="1">2.1.1.170</ecNumber>
    </recommendedName>
    <alternativeName>
        <fullName evidence="1">16S rRNA 7-methylguanosine methyltransferase</fullName>
        <shortName evidence="1">16S rRNA m7G methyltransferase</shortName>
    </alternativeName>
</protein>
<organism>
    <name type="scientific">Salmonella paratyphi B (strain ATCC BAA-1250 / SPB7)</name>
    <dbReference type="NCBI Taxonomy" id="1016998"/>
    <lineage>
        <taxon>Bacteria</taxon>
        <taxon>Pseudomonadati</taxon>
        <taxon>Pseudomonadota</taxon>
        <taxon>Gammaproteobacteria</taxon>
        <taxon>Enterobacterales</taxon>
        <taxon>Enterobacteriaceae</taxon>
        <taxon>Salmonella</taxon>
    </lineage>
</organism>
<reference key="1">
    <citation type="submission" date="2007-11" db="EMBL/GenBank/DDBJ databases">
        <authorList>
            <consortium name="The Salmonella enterica serovar Paratyphi B Genome Sequencing Project"/>
            <person name="McClelland M."/>
            <person name="Sanderson E.K."/>
            <person name="Porwollik S."/>
            <person name="Spieth J."/>
            <person name="Clifton W.S."/>
            <person name="Fulton R."/>
            <person name="Cordes M."/>
            <person name="Wollam A."/>
            <person name="Shah N."/>
            <person name="Pepin K."/>
            <person name="Bhonagiri V."/>
            <person name="Nash W."/>
            <person name="Johnson M."/>
            <person name="Thiruvilangam P."/>
            <person name="Wilson R."/>
        </authorList>
    </citation>
    <scope>NUCLEOTIDE SEQUENCE [LARGE SCALE GENOMIC DNA]</scope>
    <source>
        <strain>ATCC BAA-1250 / SPB7</strain>
    </source>
</reference>
<proteinExistence type="inferred from homology"/>
<evidence type="ECO:0000255" key="1">
    <source>
        <dbReference type="HAMAP-Rule" id="MF_00074"/>
    </source>
</evidence>